<reference key="1">
    <citation type="journal article" date="2010" name="Genome Biol. Evol.">
        <title>Continuing evolution of Burkholderia mallei through genome reduction and large-scale rearrangements.</title>
        <authorList>
            <person name="Losada L."/>
            <person name="Ronning C.M."/>
            <person name="DeShazer D."/>
            <person name="Woods D."/>
            <person name="Fedorova N."/>
            <person name="Kim H.S."/>
            <person name="Shabalina S.A."/>
            <person name="Pearson T.R."/>
            <person name="Brinkac L."/>
            <person name="Tan P."/>
            <person name="Nandi T."/>
            <person name="Crabtree J."/>
            <person name="Badger J."/>
            <person name="Beckstrom-Sternberg S."/>
            <person name="Saqib M."/>
            <person name="Schutzer S.E."/>
            <person name="Keim P."/>
            <person name="Nierman W.C."/>
        </authorList>
    </citation>
    <scope>NUCLEOTIDE SEQUENCE [LARGE SCALE GENOMIC DNA]</scope>
    <source>
        <strain>NCTC 10247</strain>
    </source>
</reference>
<feature type="chain" id="PRO_0000344012" description="Secretion apparatus protein BsaZ">
    <location>
        <begin position="1"/>
        <end position="411"/>
    </location>
</feature>
<feature type="transmembrane region" description="Helical" evidence="2">
    <location>
        <begin position="28"/>
        <end position="48"/>
    </location>
</feature>
<feature type="transmembrane region" description="Helical" evidence="2">
    <location>
        <begin position="80"/>
        <end position="100"/>
    </location>
</feature>
<feature type="transmembrane region" description="Helical" evidence="2">
    <location>
        <begin position="137"/>
        <end position="157"/>
    </location>
</feature>
<feature type="transmembrane region" description="Helical" evidence="2">
    <location>
        <begin position="175"/>
        <end position="195"/>
    </location>
</feature>
<feature type="region of interest" description="Disordered" evidence="3">
    <location>
        <begin position="341"/>
        <end position="411"/>
    </location>
</feature>
<feature type="compositionally biased region" description="Low complexity" evidence="3">
    <location>
        <begin position="370"/>
        <end position="404"/>
    </location>
</feature>
<protein>
    <recommendedName>
        <fullName>Secretion apparatus protein BsaZ</fullName>
    </recommendedName>
</protein>
<sequence length="411" mass="44494">MAEKTEKPTAKKLRDAAKKGQTFKARDIVALIVIATGALAAPALVDLTRIAAEFVRIASTGAQSNPGAYAFAWAKLFLRIAAPFVLLCAAAGALPSLVQSRFTLAVESIRFDLTALDPVKGMKRLFSWRSAKDAVKALLYVGVFALTVRVFADLYHADVFGLFRARPALLGHMWIVLTVRLVLLFLLCALPVLILDAAVEYFLYHRELKMDKHEVKQEYKESEGNHEIKSKRREIHQELLSEEIKANVEQSDFIVANPTHIAIGVYVNPDIVPIPFVSVRETNARALAVIRHAEACGVPVVRNVALARSIYRNSPRRYSFVSHDDIDGVMRVLIWLGEVEAANRGGPPPETRAPTSAEPQARDGVAPLGDACADNAFPDDAPPGAAAPNAGSPDSPAPDGGAPARTGDQNA</sequence>
<gene>
    <name type="primary">bsaZ</name>
    <name type="ordered locus">BMA10247_A0751</name>
</gene>
<proteinExistence type="inferred from homology"/>
<comment type="function">
    <text evidence="1">Part of the bsa type III secretion system, is involved in the intracellular replication of invading bacteria inside the host cell. Probably necessary for the lysis of the vacuole membrane and escape into the host cell cytoplasm (By similarity).</text>
</comment>
<comment type="subcellular location">
    <subcellularLocation>
        <location evidence="4">Cell membrane</location>
        <topology evidence="4">Multi-pass membrane protein</topology>
    </subcellularLocation>
</comment>
<comment type="similarity">
    <text evidence="4">Belongs to the type III secretion exporter family.</text>
</comment>
<name>BSAZ_BURM7</name>
<dbReference type="EMBL" id="CP000547">
    <property type="protein sequence ID" value="ABO02442.1"/>
    <property type="molecule type" value="Genomic_DNA"/>
</dbReference>
<dbReference type="RefSeq" id="WP_004188512.1">
    <property type="nucleotide sequence ID" value="NZ_CP007801.1"/>
</dbReference>
<dbReference type="SMR" id="A3MCG6"/>
<dbReference type="GeneID" id="92975827"/>
<dbReference type="KEGG" id="bmaz:BM44_4994"/>
<dbReference type="KEGG" id="bmn:BMA10247_A0751"/>
<dbReference type="PATRIC" id="fig|320389.8.peg.5730"/>
<dbReference type="GO" id="GO:0005886">
    <property type="term" value="C:plasma membrane"/>
    <property type="evidence" value="ECO:0007669"/>
    <property type="project" value="UniProtKB-SubCell"/>
</dbReference>
<dbReference type="GO" id="GO:0009306">
    <property type="term" value="P:protein secretion"/>
    <property type="evidence" value="ECO:0007669"/>
    <property type="project" value="InterPro"/>
</dbReference>
<dbReference type="Gene3D" id="6.10.250.2080">
    <property type="match status" value="1"/>
</dbReference>
<dbReference type="Gene3D" id="3.40.1690.10">
    <property type="entry name" value="secretion proteins EscU"/>
    <property type="match status" value="1"/>
</dbReference>
<dbReference type="InterPro" id="IPR006307">
    <property type="entry name" value="BsaZ-like"/>
</dbReference>
<dbReference type="InterPro" id="IPR006135">
    <property type="entry name" value="T3SS_substrate_exporter"/>
</dbReference>
<dbReference type="InterPro" id="IPR029025">
    <property type="entry name" value="T3SS_substrate_exporter_C"/>
</dbReference>
<dbReference type="NCBIfam" id="TIGR01404">
    <property type="entry name" value="FlhB_rel_III"/>
    <property type="match status" value="1"/>
</dbReference>
<dbReference type="NCBIfam" id="NF006017">
    <property type="entry name" value="PRK08156.1"/>
    <property type="match status" value="1"/>
</dbReference>
<dbReference type="PANTHER" id="PTHR30531">
    <property type="entry name" value="FLAGELLAR BIOSYNTHETIC PROTEIN FLHB"/>
    <property type="match status" value="1"/>
</dbReference>
<dbReference type="PANTHER" id="PTHR30531:SF14">
    <property type="entry name" value="SURFACE PRESENTATION OF ANTIGENS PROTEIN SPAS"/>
    <property type="match status" value="1"/>
</dbReference>
<dbReference type="Pfam" id="PF01312">
    <property type="entry name" value="Bac_export_2"/>
    <property type="match status" value="1"/>
</dbReference>
<dbReference type="PRINTS" id="PR00950">
    <property type="entry name" value="TYPE3IMSPROT"/>
</dbReference>
<dbReference type="SUPFAM" id="SSF160544">
    <property type="entry name" value="EscU C-terminal domain-like"/>
    <property type="match status" value="1"/>
</dbReference>
<organism>
    <name type="scientific">Burkholderia mallei (strain NCTC 10247)</name>
    <dbReference type="NCBI Taxonomy" id="320389"/>
    <lineage>
        <taxon>Bacteria</taxon>
        <taxon>Pseudomonadati</taxon>
        <taxon>Pseudomonadota</taxon>
        <taxon>Betaproteobacteria</taxon>
        <taxon>Burkholderiales</taxon>
        <taxon>Burkholderiaceae</taxon>
        <taxon>Burkholderia</taxon>
        <taxon>pseudomallei group</taxon>
    </lineage>
</organism>
<evidence type="ECO:0000250" key="1"/>
<evidence type="ECO:0000255" key="2"/>
<evidence type="ECO:0000256" key="3">
    <source>
        <dbReference type="SAM" id="MobiDB-lite"/>
    </source>
</evidence>
<evidence type="ECO:0000305" key="4"/>
<keyword id="KW-1003">Cell membrane</keyword>
<keyword id="KW-0472">Membrane</keyword>
<keyword id="KW-0812">Transmembrane</keyword>
<keyword id="KW-1133">Transmembrane helix</keyword>
<keyword id="KW-0843">Virulence</keyword>
<accession>A3MCG6</accession>